<protein>
    <recommendedName>
        <fullName>Ribosome biogenesis regulatory protein homolog</fullName>
    </recommendedName>
</protein>
<gene>
    <name type="primary">RRS1</name>
</gene>
<name>RRS1_BOVIN</name>
<sequence>MEGQSVEELLAKAERDEAEKLQRITVLKELELEFDLGNLLASDRNPPTGLRHAGPTQEAELRALARDNTQLLINQLWQLPTERVEEALVARLPEPSTRLPREKPVPRPRPLTRWQQFARLKGIRPKKKTNLVWDEVSGRWRRRWGYQRARDDTKEWLIEVPGNADPMEDQFAKRIQAKKERVAKNELNRLRNLARAHKMQLPSAAGMHPTGHQSKEELGRAMQVAKVSTASVGRFQERLPKEKAPRGSGKKRKFQPLFGDFAAERKSQLEMLRVMNSKKPQMDITRATNKQMREEDQEEAAKRRKMSQKGKRKGGRQGPGSKRKGGTPSQGGKRKGGLGGKMNSGPPGLSGKRKGGQHQGGKRRK</sequence>
<comment type="function">
    <text evidence="1">Involved in ribosomal large subunit assembly. May regulate the localization of the 5S RNP/5S ribonucleoprotein particle to the nucleolus.</text>
</comment>
<comment type="subunit">
    <text evidence="1">Component of a hexameric 5S RNP precursor complex, composed of 5S RNA, RRS1, RPF2/BXDC1, RPL5, RPL11 and HEATR3; this complex acts as a precursor for ribosome assembly.</text>
</comment>
<comment type="subcellular location">
    <subcellularLocation>
        <location evidence="1">Nucleus</location>
        <location evidence="1">Nucleolus</location>
    </subcellularLocation>
</comment>
<comment type="PTM">
    <text evidence="2">Citrullinated by PADI4.</text>
</comment>
<comment type="similarity">
    <text evidence="4">Belongs to the RRS1 family.</text>
</comment>
<organism>
    <name type="scientific">Bos taurus</name>
    <name type="common">Bovine</name>
    <dbReference type="NCBI Taxonomy" id="9913"/>
    <lineage>
        <taxon>Eukaryota</taxon>
        <taxon>Metazoa</taxon>
        <taxon>Chordata</taxon>
        <taxon>Craniata</taxon>
        <taxon>Vertebrata</taxon>
        <taxon>Euteleostomi</taxon>
        <taxon>Mammalia</taxon>
        <taxon>Eutheria</taxon>
        <taxon>Laurasiatheria</taxon>
        <taxon>Artiodactyla</taxon>
        <taxon>Ruminantia</taxon>
        <taxon>Pecora</taxon>
        <taxon>Bovidae</taxon>
        <taxon>Bovinae</taxon>
        <taxon>Bos</taxon>
    </lineage>
</organism>
<dbReference type="EMBL" id="BC112636">
    <property type="protein sequence ID" value="AAI12637.1"/>
    <property type="molecule type" value="mRNA"/>
</dbReference>
<dbReference type="RefSeq" id="NP_001068949.1">
    <property type="nucleotide sequence ID" value="NM_001075481.2"/>
</dbReference>
<dbReference type="SMR" id="Q2KIH4"/>
<dbReference type="FunCoup" id="Q2KIH4">
    <property type="interactions" value="2491"/>
</dbReference>
<dbReference type="STRING" id="9913.ENSBTAP00000022217"/>
<dbReference type="PaxDb" id="9913-ENSBTAP00000022217"/>
<dbReference type="GeneID" id="510956"/>
<dbReference type="KEGG" id="bta:510956"/>
<dbReference type="CTD" id="23212"/>
<dbReference type="eggNOG" id="KOG1765">
    <property type="taxonomic scope" value="Eukaryota"/>
</dbReference>
<dbReference type="InParanoid" id="Q2KIH4"/>
<dbReference type="OrthoDB" id="28455at2759"/>
<dbReference type="Proteomes" id="UP000009136">
    <property type="component" value="Unplaced"/>
</dbReference>
<dbReference type="GO" id="GO:0000794">
    <property type="term" value="C:condensed nuclear chromosome"/>
    <property type="evidence" value="ECO:0000250"/>
    <property type="project" value="UniProtKB"/>
</dbReference>
<dbReference type="GO" id="GO:0005730">
    <property type="term" value="C:nucleolus"/>
    <property type="evidence" value="ECO:0000250"/>
    <property type="project" value="UniProtKB"/>
</dbReference>
<dbReference type="GO" id="GO:0030687">
    <property type="term" value="C:preribosome, large subunit precursor"/>
    <property type="evidence" value="ECO:0000318"/>
    <property type="project" value="GO_Central"/>
</dbReference>
<dbReference type="GO" id="GO:0008097">
    <property type="term" value="F:5S rRNA binding"/>
    <property type="evidence" value="ECO:0000250"/>
    <property type="project" value="UniProtKB"/>
</dbReference>
<dbReference type="GO" id="GO:0000447">
    <property type="term" value="P:endonucleolytic cleavage in ITS1 to separate SSU-rRNA from 5.8S rRNA and LSU-rRNA from tricistronic rRNA transcript (SSU-rRNA, 5.8S rRNA, LSU-rRNA)"/>
    <property type="evidence" value="ECO:0000318"/>
    <property type="project" value="GO_Central"/>
</dbReference>
<dbReference type="GO" id="GO:0007080">
    <property type="term" value="P:mitotic metaphase chromosome alignment"/>
    <property type="evidence" value="ECO:0000250"/>
    <property type="project" value="UniProtKB"/>
</dbReference>
<dbReference type="GO" id="GO:1902570">
    <property type="term" value="P:protein localization to nucleolus"/>
    <property type="evidence" value="ECO:0000250"/>
    <property type="project" value="UniProtKB"/>
</dbReference>
<dbReference type="GO" id="GO:1901796">
    <property type="term" value="P:regulation of signal transduction by p53 class mediator"/>
    <property type="evidence" value="ECO:0000250"/>
    <property type="project" value="UniProtKB"/>
</dbReference>
<dbReference type="GO" id="GO:0000027">
    <property type="term" value="P:ribosomal large subunit assembly"/>
    <property type="evidence" value="ECO:0000250"/>
    <property type="project" value="UniProtKB"/>
</dbReference>
<dbReference type="GO" id="GO:0042273">
    <property type="term" value="P:ribosomal large subunit biogenesis"/>
    <property type="evidence" value="ECO:0000318"/>
    <property type="project" value="GO_Central"/>
</dbReference>
<dbReference type="InterPro" id="IPR007023">
    <property type="entry name" value="Ribosom_reg"/>
</dbReference>
<dbReference type="PANTHER" id="PTHR17602">
    <property type="entry name" value="RIBOSOME BIOGENESIS REGULATORY PROTEIN"/>
    <property type="match status" value="1"/>
</dbReference>
<dbReference type="PANTHER" id="PTHR17602:SF4">
    <property type="entry name" value="RIBOSOME BIOGENESIS REGULATORY PROTEIN HOMOLOG"/>
    <property type="match status" value="1"/>
</dbReference>
<dbReference type="Pfam" id="PF04939">
    <property type="entry name" value="RRS1"/>
    <property type="match status" value="1"/>
</dbReference>
<proteinExistence type="evidence at transcript level"/>
<evidence type="ECO:0000250" key="1">
    <source>
        <dbReference type="UniProtKB" id="Q15050"/>
    </source>
</evidence>
<evidence type="ECO:0000250" key="2">
    <source>
        <dbReference type="UniProtKB" id="Q9CYH6"/>
    </source>
</evidence>
<evidence type="ECO:0000256" key="3">
    <source>
        <dbReference type="SAM" id="MobiDB-lite"/>
    </source>
</evidence>
<evidence type="ECO:0000305" key="4"/>
<keyword id="KW-0007">Acetylation</keyword>
<keyword id="KW-0164">Citrullination</keyword>
<keyword id="KW-1017">Isopeptide bond</keyword>
<keyword id="KW-0539">Nucleus</keyword>
<keyword id="KW-0597">Phosphoprotein</keyword>
<keyword id="KW-1185">Reference proteome</keyword>
<keyword id="KW-0690">Ribosome biogenesis</keyword>
<keyword id="KW-0832">Ubl conjugation</keyword>
<accession>Q2KIH4</accession>
<feature type="chain" id="PRO_0000327745" description="Ribosome biogenesis regulatory protein homolog">
    <location>
        <begin position="1"/>
        <end position="365"/>
    </location>
</feature>
<feature type="region of interest" description="Disordered" evidence="3">
    <location>
        <begin position="202"/>
        <end position="221"/>
    </location>
</feature>
<feature type="region of interest" description="Disordered" evidence="3">
    <location>
        <begin position="229"/>
        <end position="254"/>
    </location>
</feature>
<feature type="region of interest" description="Disordered" evidence="3">
    <location>
        <begin position="273"/>
        <end position="365"/>
    </location>
</feature>
<feature type="compositionally biased region" description="Basic and acidic residues" evidence="3">
    <location>
        <begin position="235"/>
        <end position="245"/>
    </location>
</feature>
<feature type="compositionally biased region" description="Basic residues" evidence="3">
    <location>
        <begin position="302"/>
        <end position="325"/>
    </location>
</feature>
<feature type="compositionally biased region" description="Basic residues" evidence="3">
    <location>
        <begin position="351"/>
        <end position="365"/>
    </location>
</feature>
<feature type="modified residue" description="N-acetylmethionine" evidence="1">
    <location>
        <position position="1"/>
    </location>
</feature>
<feature type="modified residue" description="Phosphoserine" evidence="1">
    <location>
        <position position="5"/>
    </location>
</feature>
<feature type="modified residue" description="Citrulline" evidence="2">
    <location>
        <position position="273"/>
    </location>
</feature>
<feature type="cross-link" description="Glycyl lysine isopeptide (Lys-Gly) (interchain with G-Cter in SUMO2)" evidence="1">
    <location>
        <position position="154"/>
    </location>
</feature>
<feature type="cross-link" description="Glycyl lysine isopeptide (Lys-Gly) (interchain with G-Cter in SUMO2)" evidence="1">
    <location>
        <position position="226"/>
    </location>
</feature>
<feature type="cross-link" description="Glycyl lysine isopeptide (Lys-Gly) (interchain with G-Cter in SUMO2)" evidence="1">
    <location>
        <position position="266"/>
    </location>
</feature>
<reference key="1">
    <citation type="submission" date="2006-01" db="EMBL/GenBank/DDBJ databases">
        <authorList>
            <consortium name="NIH - Mammalian Gene Collection (MGC) project"/>
        </authorList>
    </citation>
    <scope>NUCLEOTIDE SEQUENCE [LARGE SCALE MRNA]</scope>
    <source>
        <strain>Hereford</strain>
        <tissue>Testis</tissue>
    </source>
</reference>